<accession>A3GFV3</accession>
<organism>
    <name type="scientific">Scheffersomyces stipitis (strain ATCC 58785 / CBS 6054 / NBRC 10063 / NRRL Y-11545)</name>
    <name type="common">Yeast</name>
    <name type="synonym">Pichia stipitis</name>
    <dbReference type="NCBI Taxonomy" id="322104"/>
    <lineage>
        <taxon>Eukaryota</taxon>
        <taxon>Fungi</taxon>
        <taxon>Dikarya</taxon>
        <taxon>Ascomycota</taxon>
        <taxon>Saccharomycotina</taxon>
        <taxon>Pichiomycetes</taxon>
        <taxon>Debaryomycetaceae</taxon>
        <taxon>Scheffersomyces</taxon>
    </lineage>
</organism>
<feature type="chain" id="PRO_0000285136" description="ATP-dependent RNA helicase FAL1">
    <location>
        <begin position="1"/>
        <end position="399"/>
    </location>
</feature>
<feature type="domain" description="Helicase ATP-binding" evidence="2">
    <location>
        <begin position="57"/>
        <end position="227"/>
    </location>
</feature>
<feature type="domain" description="Helicase C-terminal" evidence="3">
    <location>
        <begin position="238"/>
        <end position="399"/>
    </location>
</feature>
<feature type="short sequence motif" description="Q motif">
    <location>
        <begin position="26"/>
        <end position="54"/>
    </location>
</feature>
<feature type="short sequence motif" description="DEAD box">
    <location>
        <begin position="175"/>
        <end position="178"/>
    </location>
</feature>
<feature type="binding site" evidence="2">
    <location>
        <begin position="70"/>
        <end position="77"/>
    </location>
    <ligand>
        <name>ATP</name>
        <dbReference type="ChEBI" id="CHEBI:30616"/>
    </ligand>
</feature>
<evidence type="ECO:0000250" key="1"/>
<evidence type="ECO:0000255" key="2">
    <source>
        <dbReference type="PROSITE-ProRule" id="PRU00541"/>
    </source>
</evidence>
<evidence type="ECO:0000255" key="3">
    <source>
        <dbReference type="PROSITE-ProRule" id="PRU00542"/>
    </source>
</evidence>
<evidence type="ECO:0000305" key="4"/>
<proteinExistence type="inferred from homology"/>
<name>FAL1_PICST</name>
<keyword id="KW-0067">ATP-binding</keyword>
<keyword id="KW-0347">Helicase</keyword>
<keyword id="KW-0378">Hydrolase</keyword>
<keyword id="KW-0547">Nucleotide-binding</keyword>
<keyword id="KW-0539">Nucleus</keyword>
<keyword id="KW-1185">Reference proteome</keyword>
<keyword id="KW-0690">Ribosome biogenesis</keyword>
<keyword id="KW-0694">RNA-binding</keyword>
<keyword id="KW-0698">rRNA processing</keyword>
<gene>
    <name type="primary">FAL1</name>
    <name type="ORF">PICST_52941</name>
</gene>
<comment type="function">
    <text evidence="1">ATP-dependent RNA helicase involved in 40S ribosomal subunit biogenesis. Required for the processing and cleavage of 35S pre-rRNA at sites A0, A1, and A2, leading to mature 18S rRNA (By similarity).</text>
</comment>
<comment type="catalytic activity">
    <reaction>
        <text>ATP + H2O = ADP + phosphate + H(+)</text>
        <dbReference type="Rhea" id="RHEA:13065"/>
        <dbReference type="ChEBI" id="CHEBI:15377"/>
        <dbReference type="ChEBI" id="CHEBI:15378"/>
        <dbReference type="ChEBI" id="CHEBI:30616"/>
        <dbReference type="ChEBI" id="CHEBI:43474"/>
        <dbReference type="ChEBI" id="CHEBI:456216"/>
        <dbReference type="EC" id="3.6.4.13"/>
    </reaction>
</comment>
<comment type="subcellular location">
    <subcellularLocation>
        <location evidence="1">Nucleus</location>
        <location evidence="1">Nucleolus</location>
    </subcellularLocation>
</comment>
<comment type="domain">
    <text>The Q motif is unique to and characteristic of the DEAD box family of RNA helicases and controls ATP binding and hydrolysis.</text>
</comment>
<comment type="similarity">
    <text evidence="4">Belongs to the DEAD box helicase family. DDX48/FAL1 subfamily.</text>
</comment>
<sequence length="399" mass="45461">MDDFDRDLDNELEFSHKSTKNVKVHATFESMNLKPDLLKGIYGYGFEAPSAIQSRAIMQIINGRDTIAQAQSGTGKTATFSIGMLQAIDTNAKDCQALILSPTRELAVQIQNVVKHLGDYMNIHTHACIGGTHVGDDIKKLKQGQQIVSGTPGRVVDMVKRQQLSTRNIKMLILDEADELFTKGFKEQIYEVYKYLPPSVQVVVVSATLSREVLEMTNKFTTDPVKILVKRDQITLEGIKQYHVQCEKEDWKFDTLCDLYDNLTITQAVIFCNTKLKVNWLTDQMRKQNFTVVSMHGDMKQDERDSIMNDFRTGNSRVLISTDVWARGIDVQQVSLVINYDLPTDKENYIHRIGRSGRFGRKGVAINLITKEDVATLRDFEKYYSTKIREMPMNINDIM</sequence>
<protein>
    <recommendedName>
        <fullName>ATP-dependent RNA helicase FAL1</fullName>
        <ecNumber>3.6.4.13</ecNumber>
    </recommendedName>
</protein>
<dbReference type="EC" id="3.6.4.13"/>
<dbReference type="EMBL" id="AAVQ01000001">
    <property type="protein sequence ID" value="EAZ63408.1"/>
    <property type="molecule type" value="Genomic_DNA"/>
</dbReference>
<dbReference type="RefSeq" id="XP_001387431.1">
    <property type="nucleotide sequence ID" value="XM_001387394.1"/>
</dbReference>
<dbReference type="SMR" id="A3GFV3"/>
<dbReference type="FunCoup" id="A3GFV3">
    <property type="interactions" value="681"/>
</dbReference>
<dbReference type="STRING" id="322104.A3GFV3"/>
<dbReference type="GeneID" id="4851152"/>
<dbReference type="KEGG" id="pic:PICST_52941"/>
<dbReference type="eggNOG" id="KOG0328">
    <property type="taxonomic scope" value="Eukaryota"/>
</dbReference>
<dbReference type="HOGENOM" id="CLU_003041_1_0_1"/>
<dbReference type="InParanoid" id="A3GFV3"/>
<dbReference type="OMA" id="DTIHGDK"/>
<dbReference type="OrthoDB" id="10265785at2759"/>
<dbReference type="Proteomes" id="UP000002258">
    <property type="component" value="Chromosome 1"/>
</dbReference>
<dbReference type="GO" id="GO:0097078">
    <property type="term" value="C:FAL1-SGD1 complex"/>
    <property type="evidence" value="ECO:0007669"/>
    <property type="project" value="EnsemblFungi"/>
</dbReference>
<dbReference type="GO" id="GO:0005730">
    <property type="term" value="C:nucleolus"/>
    <property type="evidence" value="ECO:0007669"/>
    <property type="project" value="UniProtKB-SubCell"/>
</dbReference>
<dbReference type="GO" id="GO:0030688">
    <property type="term" value="C:preribosome, small subunit precursor"/>
    <property type="evidence" value="ECO:0007669"/>
    <property type="project" value="EnsemblFungi"/>
</dbReference>
<dbReference type="GO" id="GO:0032040">
    <property type="term" value="C:small-subunit processome"/>
    <property type="evidence" value="ECO:0007669"/>
    <property type="project" value="EnsemblFungi"/>
</dbReference>
<dbReference type="GO" id="GO:0005524">
    <property type="term" value="F:ATP binding"/>
    <property type="evidence" value="ECO:0007669"/>
    <property type="project" value="UniProtKB-KW"/>
</dbReference>
<dbReference type="GO" id="GO:0016887">
    <property type="term" value="F:ATP hydrolysis activity"/>
    <property type="evidence" value="ECO:0007669"/>
    <property type="project" value="RHEA"/>
</dbReference>
<dbReference type="GO" id="GO:0003723">
    <property type="term" value="F:RNA binding"/>
    <property type="evidence" value="ECO:0007669"/>
    <property type="project" value="UniProtKB-KW"/>
</dbReference>
<dbReference type="GO" id="GO:0003724">
    <property type="term" value="F:RNA helicase activity"/>
    <property type="evidence" value="ECO:0007669"/>
    <property type="project" value="UniProtKB-EC"/>
</dbReference>
<dbReference type="GO" id="GO:0000462">
    <property type="term" value="P:maturation of SSU-rRNA from tricistronic rRNA transcript (SSU-rRNA, 5.8S rRNA, LSU-rRNA)"/>
    <property type="evidence" value="ECO:0007669"/>
    <property type="project" value="EnsemblFungi"/>
</dbReference>
<dbReference type="CDD" id="cd18787">
    <property type="entry name" value="SF2_C_DEAD"/>
    <property type="match status" value="1"/>
</dbReference>
<dbReference type="FunFam" id="3.40.50.300:FF:000849">
    <property type="entry name" value="ATP-dependent RNA helicase DBP5"/>
    <property type="match status" value="1"/>
</dbReference>
<dbReference type="FunFam" id="3.40.50.300:FF:000031">
    <property type="entry name" value="Eukaryotic initiation factor 4A-III"/>
    <property type="match status" value="1"/>
</dbReference>
<dbReference type="Gene3D" id="3.40.50.300">
    <property type="entry name" value="P-loop containing nucleotide triphosphate hydrolases"/>
    <property type="match status" value="2"/>
</dbReference>
<dbReference type="InterPro" id="IPR011545">
    <property type="entry name" value="DEAD/DEAH_box_helicase_dom"/>
</dbReference>
<dbReference type="InterPro" id="IPR014001">
    <property type="entry name" value="Helicase_ATP-bd"/>
</dbReference>
<dbReference type="InterPro" id="IPR001650">
    <property type="entry name" value="Helicase_C-like"/>
</dbReference>
<dbReference type="InterPro" id="IPR027417">
    <property type="entry name" value="P-loop_NTPase"/>
</dbReference>
<dbReference type="InterPro" id="IPR000629">
    <property type="entry name" value="RNA-helicase_DEAD-box_CS"/>
</dbReference>
<dbReference type="InterPro" id="IPR014014">
    <property type="entry name" value="RNA_helicase_DEAD_Q_motif"/>
</dbReference>
<dbReference type="PANTHER" id="PTHR47958">
    <property type="entry name" value="ATP-DEPENDENT RNA HELICASE DBP3"/>
    <property type="match status" value="1"/>
</dbReference>
<dbReference type="Pfam" id="PF00270">
    <property type="entry name" value="DEAD"/>
    <property type="match status" value="1"/>
</dbReference>
<dbReference type="Pfam" id="PF00271">
    <property type="entry name" value="Helicase_C"/>
    <property type="match status" value="1"/>
</dbReference>
<dbReference type="SMART" id="SM00487">
    <property type="entry name" value="DEXDc"/>
    <property type="match status" value="1"/>
</dbReference>
<dbReference type="SMART" id="SM00490">
    <property type="entry name" value="HELICc"/>
    <property type="match status" value="1"/>
</dbReference>
<dbReference type="SUPFAM" id="SSF52540">
    <property type="entry name" value="P-loop containing nucleoside triphosphate hydrolases"/>
    <property type="match status" value="1"/>
</dbReference>
<dbReference type="PROSITE" id="PS00039">
    <property type="entry name" value="DEAD_ATP_HELICASE"/>
    <property type="match status" value="1"/>
</dbReference>
<dbReference type="PROSITE" id="PS51192">
    <property type="entry name" value="HELICASE_ATP_BIND_1"/>
    <property type="match status" value="1"/>
</dbReference>
<dbReference type="PROSITE" id="PS51194">
    <property type="entry name" value="HELICASE_CTER"/>
    <property type="match status" value="1"/>
</dbReference>
<dbReference type="PROSITE" id="PS51195">
    <property type="entry name" value="Q_MOTIF"/>
    <property type="match status" value="1"/>
</dbReference>
<reference key="1">
    <citation type="journal article" date="2007" name="Nat. Biotechnol.">
        <title>Genome sequence of the lignocellulose-bioconverting and xylose-fermenting yeast Pichia stipitis.</title>
        <authorList>
            <person name="Jeffries T.W."/>
            <person name="Grigoriev I.V."/>
            <person name="Grimwood J."/>
            <person name="Laplaza J.M."/>
            <person name="Aerts A."/>
            <person name="Salamov A."/>
            <person name="Schmutz J."/>
            <person name="Lindquist E."/>
            <person name="Dehal P."/>
            <person name="Shapiro H."/>
            <person name="Jin Y.-S."/>
            <person name="Passoth V."/>
            <person name="Richardson P.M."/>
        </authorList>
    </citation>
    <scope>NUCLEOTIDE SEQUENCE [LARGE SCALE GENOMIC DNA]</scope>
    <source>
        <strain>ATCC 58785 / CBS 6054 / NBRC 10063 / NRRL Y-11545</strain>
    </source>
</reference>